<accession>A8LLE0</accession>
<sequence length="308" mass="34262">MTENAAPTRAGFVALIGEPNAGKSTLTNAMVGAKVSIVTHKVQTTRARIRGVALEGAAQIVFVDTPGLFRPRRRLDRAMVAAAWGGAADADIVVLMVEAHRGMTDGVRAILETLNERRDPKQIVALAINKIDRVKSEVLLKLTQDLNAAYPFAETFMISAEKGYGVADLRAWLGASLPEGPWMYPEDQIADVPLRMIAAEITREKLTLRLHQELPYQLTVETENWEERKDGSVRIDQVVYVMRDGHKGILLGHKGETAKAVSKAAREELVEFLGRKVHLFLQVKVRPNWLEEKERFDEMGLDFRDGNA</sequence>
<dbReference type="EMBL" id="CP000830">
    <property type="protein sequence ID" value="ABV91950.1"/>
    <property type="molecule type" value="Genomic_DNA"/>
</dbReference>
<dbReference type="RefSeq" id="WP_012176883.1">
    <property type="nucleotide sequence ID" value="NC_009952.1"/>
</dbReference>
<dbReference type="SMR" id="A8LLE0"/>
<dbReference type="STRING" id="398580.Dshi_0201"/>
<dbReference type="KEGG" id="dsh:Dshi_0201"/>
<dbReference type="eggNOG" id="COG1159">
    <property type="taxonomic scope" value="Bacteria"/>
</dbReference>
<dbReference type="HOGENOM" id="CLU_038009_1_1_5"/>
<dbReference type="OrthoDB" id="9805918at2"/>
<dbReference type="Proteomes" id="UP000006833">
    <property type="component" value="Chromosome"/>
</dbReference>
<dbReference type="GO" id="GO:0005829">
    <property type="term" value="C:cytosol"/>
    <property type="evidence" value="ECO:0007669"/>
    <property type="project" value="TreeGrafter"/>
</dbReference>
<dbReference type="GO" id="GO:0005886">
    <property type="term" value="C:plasma membrane"/>
    <property type="evidence" value="ECO:0007669"/>
    <property type="project" value="UniProtKB-SubCell"/>
</dbReference>
<dbReference type="GO" id="GO:0005525">
    <property type="term" value="F:GTP binding"/>
    <property type="evidence" value="ECO:0007669"/>
    <property type="project" value="UniProtKB-UniRule"/>
</dbReference>
<dbReference type="GO" id="GO:0003924">
    <property type="term" value="F:GTPase activity"/>
    <property type="evidence" value="ECO:0007669"/>
    <property type="project" value="UniProtKB-UniRule"/>
</dbReference>
<dbReference type="GO" id="GO:0043024">
    <property type="term" value="F:ribosomal small subunit binding"/>
    <property type="evidence" value="ECO:0007669"/>
    <property type="project" value="TreeGrafter"/>
</dbReference>
<dbReference type="GO" id="GO:0070181">
    <property type="term" value="F:small ribosomal subunit rRNA binding"/>
    <property type="evidence" value="ECO:0007669"/>
    <property type="project" value="UniProtKB-UniRule"/>
</dbReference>
<dbReference type="GO" id="GO:0000028">
    <property type="term" value="P:ribosomal small subunit assembly"/>
    <property type="evidence" value="ECO:0007669"/>
    <property type="project" value="TreeGrafter"/>
</dbReference>
<dbReference type="CDD" id="cd04163">
    <property type="entry name" value="Era"/>
    <property type="match status" value="1"/>
</dbReference>
<dbReference type="CDD" id="cd22534">
    <property type="entry name" value="KH-II_Era"/>
    <property type="match status" value="1"/>
</dbReference>
<dbReference type="Gene3D" id="3.30.300.20">
    <property type="match status" value="1"/>
</dbReference>
<dbReference type="Gene3D" id="3.40.50.300">
    <property type="entry name" value="P-loop containing nucleotide triphosphate hydrolases"/>
    <property type="match status" value="1"/>
</dbReference>
<dbReference type="HAMAP" id="MF_00367">
    <property type="entry name" value="GTPase_Era"/>
    <property type="match status" value="1"/>
</dbReference>
<dbReference type="InterPro" id="IPR030388">
    <property type="entry name" value="G_ERA_dom"/>
</dbReference>
<dbReference type="InterPro" id="IPR006073">
    <property type="entry name" value="GTP-bd"/>
</dbReference>
<dbReference type="InterPro" id="IPR005662">
    <property type="entry name" value="GTPase_Era-like"/>
</dbReference>
<dbReference type="InterPro" id="IPR015946">
    <property type="entry name" value="KH_dom-like_a/b"/>
</dbReference>
<dbReference type="InterPro" id="IPR004044">
    <property type="entry name" value="KH_dom_type_2"/>
</dbReference>
<dbReference type="InterPro" id="IPR009019">
    <property type="entry name" value="KH_sf_prok-type"/>
</dbReference>
<dbReference type="InterPro" id="IPR027417">
    <property type="entry name" value="P-loop_NTPase"/>
</dbReference>
<dbReference type="InterPro" id="IPR005225">
    <property type="entry name" value="Small_GTP-bd"/>
</dbReference>
<dbReference type="NCBIfam" id="TIGR00436">
    <property type="entry name" value="era"/>
    <property type="match status" value="1"/>
</dbReference>
<dbReference type="NCBIfam" id="NF000908">
    <property type="entry name" value="PRK00089.1"/>
    <property type="match status" value="1"/>
</dbReference>
<dbReference type="NCBIfam" id="TIGR00231">
    <property type="entry name" value="small_GTP"/>
    <property type="match status" value="1"/>
</dbReference>
<dbReference type="PANTHER" id="PTHR42698">
    <property type="entry name" value="GTPASE ERA"/>
    <property type="match status" value="1"/>
</dbReference>
<dbReference type="PANTHER" id="PTHR42698:SF1">
    <property type="entry name" value="GTPASE ERA, MITOCHONDRIAL"/>
    <property type="match status" value="1"/>
</dbReference>
<dbReference type="Pfam" id="PF07650">
    <property type="entry name" value="KH_2"/>
    <property type="match status" value="1"/>
</dbReference>
<dbReference type="Pfam" id="PF01926">
    <property type="entry name" value="MMR_HSR1"/>
    <property type="match status" value="1"/>
</dbReference>
<dbReference type="SUPFAM" id="SSF52540">
    <property type="entry name" value="P-loop containing nucleoside triphosphate hydrolases"/>
    <property type="match status" value="1"/>
</dbReference>
<dbReference type="SUPFAM" id="SSF54814">
    <property type="entry name" value="Prokaryotic type KH domain (KH-domain type II)"/>
    <property type="match status" value="1"/>
</dbReference>
<dbReference type="PROSITE" id="PS51713">
    <property type="entry name" value="G_ERA"/>
    <property type="match status" value="1"/>
</dbReference>
<dbReference type="PROSITE" id="PS50823">
    <property type="entry name" value="KH_TYPE_2"/>
    <property type="match status" value="1"/>
</dbReference>
<protein>
    <recommendedName>
        <fullName evidence="1">GTPase Era</fullName>
    </recommendedName>
</protein>
<proteinExistence type="inferred from homology"/>
<keyword id="KW-0997">Cell inner membrane</keyword>
<keyword id="KW-1003">Cell membrane</keyword>
<keyword id="KW-0963">Cytoplasm</keyword>
<keyword id="KW-0342">GTP-binding</keyword>
<keyword id="KW-0472">Membrane</keyword>
<keyword id="KW-0547">Nucleotide-binding</keyword>
<keyword id="KW-1185">Reference proteome</keyword>
<keyword id="KW-0690">Ribosome biogenesis</keyword>
<keyword id="KW-0694">RNA-binding</keyword>
<keyword id="KW-0699">rRNA-binding</keyword>
<evidence type="ECO:0000255" key="1">
    <source>
        <dbReference type="HAMAP-Rule" id="MF_00367"/>
    </source>
</evidence>
<evidence type="ECO:0000255" key="2">
    <source>
        <dbReference type="PROSITE-ProRule" id="PRU01050"/>
    </source>
</evidence>
<name>ERA_DINSH</name>
<feature type="chain" id="PRO_1000079685" description="GTPase Era">
    <location>
        <begin position="1"/>
        <end position="308"/>
    </location>
</feature>
<feature type="domain" description="Era-type G" evidence="2">
    <location>
        <begin position="9"/>
        <end position="179"/>
    </location>
</feature>
<feature type="domain" description="KH type-2" evidence="1">
    <location>
        <begin position="210"/>
        <end position="287"/>
    </location>
</feature>
<feature type="region of interest" description="G1" evidence="2">
    <location>
        <begin position="17"/>
        <end position="24"/>
    </location>
</feature>
<feature type="region of interest" description="G2" evidence="2">
    <location>
        <begin position="43"/>
        <end position="47"/>
    </location>
</feature>
<feature type="region of interest" description="G3" evidence="2">
    <location>
        <begin position="64"/>
        <end position="67"/>
    </location>
</feature>
<feature type="region of interest" description="G4" evidence="2">
    <location>
        <begin position="129"/>
        <end position="132"/>
    </location>
</feature>
<feature type="region of interest" description="G5" evidence="2">
    <location>
        <begin position="158"/>
        <end position="160"/>
    </location>
</feature>
<feature type="binding site" evidence="1">
    <location>
        <begin position="17"/>
        <end position="24"/>
    </location>
    <ligand>
        <name>GTP</name>
        <dbReference type="ChEBI" id="CHEBI:37565"/>
    </ligand>
</feature>
<feature type="binding site" evidence="1">
    <location>
        <begin position="64"/>
        <end position="68"/>
    </location>
    <ligand>
        <name>GTP</name>
        <dbReference type="ChEBI" id="CHEBI:37565"/>
    </ligand>
</feature>
<feature type="binding site" evidence="1">
    <location>
        <begin position="129"/>
        <end position="132"/>
    </location>
    <ligand>
        <name>GTP</name>
        <dbReference type="ChEBI" id="CHEBI:37565"/>
    </ligand>
</feature>
<reference key="1">
    <citation type="journal article" date="2010" name="ISME J.">
        <title>The complete genome sequence of the algal symbiont Dinoroseobacter shibae: a hitchhiker's guide to life in the sea.</title>
        <authorList>
            <person name="Wagner-Dobler I."/>
            <person name="Ballhausen B."/>
            <person name="Berger M."/>
            <person name="Brinkhoff T."/>
            <person name="Buchholz I."/>
            <person name="Bunk B."/>
            <person name="Cypionka H."/>
            <person name="Daniel R."/>
            <person name="Drepper T."/>
            <person name="Gerdts G."/>
            <person name="Hahnke S."/>
            <person name="Han C."/>
            <person name="Jahn D."/>
            <person name="Kalhoefer D."/>
            <person name="Kiss H."/>
            <person name="Klenk H.P."/>
            <person name="Kyrpides N."/>
            <person name="Liebl W."/>
            <person name="Liesegang H."/>
            <person name="Meincke L."/>
            <person name="Pati A."/>
            <person name="Petersen J."/>
            <person name="Piekarski T."/>
            <person name="Pommerenke C."/>
            <person name="Pradella S."/>
            <person name="Pukall R."/>
            <person name="Rabus R."/>
            <person name="Stackebrandt E."/>
            <person name="Thole S."/>
            <person name="Thompson L."/>
            <person name="Tielen P."/>
            <person name="Tomasch J."/>
            <person name="von Jan M."/>
            <person name="Wanphrut N."/>
            <person name="Wichels A."/>
            <person name="Zech H."/>
            <person name="Simon M."/>
        </authorList>
    </citation>
    <scope>NUCLEOTIDE SEQUENCE [LARGE SCALE GENOMIC DNA]</scope>
    <source>
        <strain>DSM 16493 / NCIMB 14021 / DFL 12</strain>
    </source>
</reference>
<comment type="function">
    <text evidence="1">An essential GTPase that binds both GDP and GTP, with rapid nucleotide exchange. Plays a role in 16S rRNA processing and 30S ribosomal subunit biogenesis and possibly also in cell cycle regulation and energy metabolism.</text>
</comment>
<comment type="subunit">
    <text evidence="1">Monomer.</text>
</comment>
<comment type="subcellular location">
    <subcellularLocation>
        <location>Cytoplasm</location>
    </subcellularLocation>
    <subcellularLocation>
        <location evidence="1">Cell inner membrane</location>
        <topology evidence="1">Peripheral membrane protein</topology>
    </subcellularLocation>
</comment>
<comment type="similarity">
    <text evidence="1 2">Belongs to the TRAFAC class TrmE-Era-EngA-EngB-Septin-like GTPase superfamily. Era GTPase family.</text>
</comment>
<gene>
    <name evidence="1" type="primary">era</name>
    <name type="ordered locus">Dshi_0201</name>
</gene>
<organism>
    <name type="scientific">Dinoroseobacter shibae (strain DSM 16493 / NCIMB 14021 / DFL 12)</name>
    <dbReference type="NCBI Taxonomy" id="398580"/>
    <lineage>
        <taxon>Bacteria</taxon>
        <taxon>Pseudomonadati</taxon>
        <taxon>Pseudomonadota</taxon>
        <taxon>Alphaproteobacteria</taxon>
        <taxon>Rhodobacterales</taxon>
        <taxon>Roseobacteraceae</taxon>
        <taxon>Dinoroseobacter</taxon>
    </lineage>
</organism>